<protein>
    <recommendedName>
        <fullName evidence="5">Vitellogenin</fullName>
    </recommendedName>
    <component>
        <recommendedName>
            <fullName evidence="4">Toxin-binding protein TPOBP-10</fullName>
        </recommendedName>
        <alternativeName>
            <fullName evidence="4">Ovary toxin-binding protein 10 kDa</fullName>
            <shortName evidence="4">TPOBP-10</shortName>
        </alternativeName>
    </component>
</protein>
<comment type="function">
    <text evidence="5">Precursor of the egg-yolk proteins that are sources of nutrients during early development of oviparous organisms.</text>
</comment>
<comment type="function">
    <molecule>Toxin-binding protein TPOBP-10</molecule>
    <text evidence="3">Probably binds tetrodotoxin in the ovary.</text>
</comment>
<comment type="tissue specificity">
    <text evidence="3">Expressed in liver, ovary and, to a lesser extent, in muscle, intestine, skin, kidney and heart.</text>
</comment>
<feature type="chain" id="PRO_0000443996" description="Vitellogenin" evidence="5">
    <location>
        <begin position="1" status="less than"/>
        <end position="229" status="greater than"/>
    </location>
</feature>
<feature type="chain" id="PRO_0000443997" description="Toxin-binding protein TPOBP-10" evidence="5">
    <location>
        <begin position="1"/>
        <end status="unknown"/>
    </location>
</feature>
<feature type="domain" description="VWFD" evidence="2">
    <location>
        <begin position="1" status="less than"/>
        <end position="136"/>
    </location>
</feature>
<feature type="glycosylation site" description="N-linked (GlcNAc...) asparagine" evidence="1">
    <location>
        <position position="198"/>
    </location>
</feature>
<feature type="non-terminal residue" evidence="6">
    <location>
        <position position="1"/>
    </location>
</feature>
<feature type="non-terminal residue" evidence="6">
    <location>
        <position position="229"/>
    </location>
</feature>
<organism evidence="6">
    <name type="scientific">Takifugu pardalis</name>
    <name type="common">Panther puffer</name>
    <name type="synonym">Tetraodon pardalis</name>
    <dbReference type="NCBI Taxonomy" id="98921"/>
    <lineage>
        <taxon>Eukaryota</taxon>
        <taxon>Metazoa</taxon>
        <taxon>Chordata</taxon>
        <taxon>Craniata</taxon>
        <taxon>Vertebrata</taxon>
        <taxon>Euteleostomi</taxon>
        <taxon>Actinopterygii</taxon>
        <taxon>Neopterygii</taxon>
        <taxon>Teleostei</taxon>
        <taxon>Neoteleostei</taxon>
        <taxon>Acanthomorphata</taxon>
        <taxon>Eupercaria</taxon>
        <taxon>Tetraodontiformes</taxon>
        <taxon>Tetradontoidea</taxon>
        <taxon>Tetraodontidae</taxon>
        <taxon>Takifugu</taxon>
    </lineage>
</organism>
<keyword id="KW-0903">Direct protein sequencing</keyword>
<keyword id="KW-0325">Glycoprotein</keyword>
<keyword id="KW-0758">Storage protein</keyword>
<name>VIT_TAKPA</name>
<evidence type="ECO:0000255" key="1"/>
<evidence type="ECO:0000255" key="2">
    <source>
        <dbReference type="PROSITE-ProRule" id="PRU00580"/>
    </source>
</evidence>
<evidence type="ECO:0000269" key="3">
    <source>
    </source>
</evidence>
<evidence type="ECO:0000303" key="4">
    <source>
    </source>
</evidence>
<evidence type="ECO:0000305" key="5"/>
<evidence type="ECO:0000312" key="6">
    <source>
        <dbReference type="EMBL" id="BBA57169.1"/>
    </source>
</evidence>
<proteinExistence type="evidence at protein level"/>
<reference evidence="6" key="1">
    <citation type="journal article" date="2017" name="Toxicon">
        <title>A novel function of vitellogenin subdomain, vWF type D, as a toxin-binding protein in the pufferfish Takifugu pardalis ovary.</title>
        <authorList>
            <person name="Yin X."/>
            <person name="Kiriake A."/>
            <person name="Ohta A."/>
            <person name="Kitani Y."/>
            <person name="Ishizaki S."/>
            <person name="Nagashima Y."/>
        </authorList>
    </citation>
    <scope>NUCLEOTIDE SEQUENCE [MRNA] OF 18-229</scope>
    <scope>PROTEIN SEQUENCE OF 1-29</scope>
    <scope>PROBABLE FUNCTION OF TOXIN-BINDING PROTEIN TPOBP-10</scope>
    <scope>TISSUE SPECIFICITY</scope>
    <scope>IDENTIFICATION BY MASS SPECTROMETRY</scope>
    <source>
        <tissue evidence="6">Liver</tissue>
        <tissue evidence="4">Ovary</tissue>
    </source>
</reference>
<dbReference type="EMBL" id="LC190510">
    <property type="protein sequence ID" value="BBA57169.1"/>
    <property type="molecule type" value="mRNA"/>
</dbReference>
<dbReference type="GO" id="GO:0005319">
    <property type="term" value="F:lipid transporter activity"/>
    <property type="evidence" value="ECO:0007669"/>
    <property type="project" value="TreeGrafter"/>
</dbReference>
<dbReference type="GO" id="GO:0045735">
    <property type="term" value="F:nutrient reservoir activity"/>
    <property type="evidence" value="ECO:0007669"/>
    <property type="project" value="UniProtKB-KW"/>
</dbReference>
<dbReference type="GO" id="GO:0071391">
    <property type="term" value="P:cellular response to estrogen stimulus"/>
    <property type="evidence" value="ECO:0007669"/>
    <property type="project" value="TreeGrafter"/>
</dbReference>
<dbReference type="GO" id="GO:0032355">
    <property type="term" value="P:response to estradiol"/>
    <property type="evidence" value="ECO:0007669"/>
    <property type="project" value="TreeGrafter"/>
</dbReference>
<dbReference type="InterPro" id="IPR050733">
    <property type="entry name" value="Vitellogenin/Apolipophorin"/>
</dbReference>
<dbReference type="InterPro" id="IPR001846">
    <property type="entry name" value="VWF_type-D"/>
</dbReference>
<dbReference type="PANTHER" id="PTHR23345">
    <property type="entry name" value="VITELLOGENIN-RELATED"/>
    <property type="match status" value="1"/>
</dbReference>
<dbReference type="PANTHER" id="PTHR23345:SF9">
    <property type="entry name" value="VITELLOGENIN-RELATED"/>
    <property type="match status" value="1"/>
</dbReference>
<dbReference type="Pfam" id="PF00094">
    <property type="entry name" value="VWD"/>
    <property type="match status" value="1"/>
</dbReference>
<dbReference type="PROSITE" id="PS51233">
    <property type="entry name" value="VWFD"/>
    <property type="match status" value="1"/>
</dbReference>
<accession>A0A292G9J6</accession>
<accession>C0HK78</accession>
<accession>C0HK97</accession>
<sequence length="229" mass="25337">IVMLKNDNVEQKHINIKIADIDIDLFPKSGNIGVKVNGVEIPMENLPYYHPTVKIQIRQKGEGISVVAPSLGLSEVYMDSKSWKVEVVDWMKGQTCGLCGKADGEIKQEFRMPNGHLTKNAVTYAHSWILAAESCRDNSECRIKLDSVELEKRAVIYGQESRCFSVEPVLRCLPGCFPVKTTSVTVGFHCVAADSNVNKSEVLRGIQGKRVDLREKADAHLACSCTAQC</sequence>